<comment type="function">
    <text evidence="4">Ribosome-binding protein that promotes ribosome hibernation, a process during which ribosomes are stabilized in an inactive state and preserved from proteasomal degradation (PubMed:36653451). Acts via its association with eef2/eEF2 factor at the A-site of the ribosome, promoting ribosome stabilization in an inactive state compatible with storage (PubMed:36653451). Plays a key role in ribosome hibernation in the mature egg by promoting ribosome stabilization (PubMed:36653451). Ribosomes, which are produced in large quantities during oogenesis, are stored and translationally repressed in the egg and early embryo (PubMed:36653451).</text>
</comment>
<comment type="subunit">
    <text evidence="4">Associates with ribosomes; promoting ribosome stabilization (PubMed:36653451). Interacts with eef2/eEF2; promoting ribosome stabilization (PubMed:36653451).</text>
</comment>
<comment type="subcellular location">
    <subcellularLocation>
        <location evidence="1">Nucleus</location>
    </subcellularLocation>
    <subcellularLocation>
        <location evidence="2">Cytoplasm</location>
    </subcellularLocation>
    <subcellularLocation>
        <location evidence="1">Cytoplasm</location>
        <location evidence="1">Stress granule</location>
    </subcellularLocation>
    <subcellularLocation>
        <location evidence="1">Nucleus</location>
        <location evidence="1">Nucleolus</location>
    </subcellularLocation>
    <subcellularLocation>
        <location evidence="1">Nucleus speckle</location>
    </subcellularLocation>
    <subcellularLocation>
        <location evidence="1">Nucleus</location>
        <location evidence="1">Cajal body</location>
    </subcellularLocation>
    <text evidence="2">Predominantly cytoplasmic.</text>
</comment>
<comment type="similarity">
    <text evidence="7">Belongs to the SERBP1-HABP4 family.</text>
</comment>
<protein>
    <recommendedName>
        <fullName evidence="7">Intracellular hyaluronan-binding protein 4</fullName>
    </recommendedName>
</protein>
<reference key="1">
    <citation type="journal article" date="2013" name="Nature">
        <title>The zebrafish reference genome sequence and its relationship to the human genome.</title>
        <authorList>
            <person name="Howe K."/>
            <person name="Clark M.D."/>
            <person name="Torroja C.F."/>
            <person name="Torrance J."/>
            <person name="Berthelot C."/>
            <person name="Muffato M."/>
            <person name="Collins J.E."/>
            <person name="Humphray S."/>
            <person name="McLaren K."/>
            <person name="Matthews L."/>
            <person name="McLaren S."/>
            <person name="Sealy I."/>
            <person name="Caccamo M."/>
            <person name="Churcher C."/>
            <person name="Scott C."/>
            <person name="Barrett J.C."/>
            <person name="Koch R."/>
            <person name="Rauch G.J."/>
            <person name="White S."/>
            <person name="Chow W."/>
            <person name="Kilian B."/>
            <person name="Quintais L.T."/>
            <person name="Guerra-Assuncao J.A."/>
            <person name="Zhou Y."/>
            <person name="Gu Y."/>
            <person name="Yen J."/>
            <person name="Vogel J.H."/>
            <person name="Eyre T."/>
            <person name="Redmond S."/>
            <person name="Banerjee R."/>
            <person name="Chi J."/>
            <person name="Fu B."/>
            <person name="Langley E."/>
            <person name="Maguire S.F."/>
            <person name="Laird G.K."/>
            <person name="Lloyd D."/>
            <person name="Kenyon E."/>
            <person name="Donaldson S."/>
            <person name="Sehra H."/>
            <person name="Almeida-King J."/>
            <person name="Loveland J."/>
            <person name="Trevanion S."/>
            <person name="Jones M."/>
            <person name="Quail M."/>
            <person name="Willey D."/>
            <person name="Hunt A."/>
            <person name="Burton J."/>
            <person name="Sims S."/>
            <person name="McLay K."/>
            <person name="Plumb B."/>
            <person name="Davis J."/>
            <person name="Clee C."/>
            <person name="Oliver K."/>
            <person name="Clark R."/>
            <person name="Riddle C."/>
            <person name="Elliot D."/>
            <person name="Threadgold G."/>
            <person name="Harden G."/>
            <person name="Ware D."/>
            <person name="Begum S."/>
            <person name="Mortimore B."/>
            <person name="Kerry G."/>
            <person name="Heath P."/>
            <person name="Phillimore B."/>
            <person name="Tracey A."/>
            <person name="Corby N."/>
            <person name="Dunn M."/>
            <person name="Johnson C."/>
            <person name="Wood J."/>
            <person name="Clark S."/>
            <person name="Pelan S."/>
            <person name="Griffiths G."/>
            <person name="Smith M."/>
            <person name="Glithero R."/>
            <person name="Howden P."/>
            <person name="Barker N."/>
            <person name="Lloyd C."/>
            <person name="Stevens C."/>
            <person name="Harley J."/>
            <person name="Holt K."/>
            <person name="Panagiotidis G."/>
            <person name="Lovell J."/>
            <person name="Beasley H."/>
            <person name="Henderson C."/>
            <person name="Gordon D."/>
            <person name="Auger K."/>
            <person name="Wright D."/>
            <person name="Collins J."/>
            <person name="Raisen C."/>
            <person name="Dyer L."/>
            <person name="Leung K."/>
            <person name="Robertson L."/>
            <person name="Ambridge K."/>
            <person name="Leongamornlert D."/>
            <person name="McGuire S."/>
            <person name="Gilderthorp R."/>
            <person name="Griffiths C."/>
            <person name="Manthravadi D."/>
            <person name="Nichol S."/>
            <person name="Barker G."/>
            <person name="Whitehead S."/>
            <person name="Kay M."/>
            <person name="Brown J."/>
            <person name="Murnane C."/>
            <person name="Gray E."/>
            <person name="Humphries M."/>
            <person name="Sycamore N."/>
            <person name="Barker D."/>
            <person name="Saunders D."/>
            <person name="Wallis J."/>
            <person name="Babbage A."/>
            <person name="Hammond S."/>
            <person name="Mashreghi-Mohammadi M."/>
            <person name="Barr L."/>
            <person name="Martin S."/>
            <person name="Wray P."/>
            <person name="Ellington A."/>
            <person name="Matthews N."/>
            <person name="Ellwood M."/>
            <person name="Woodmansey R."/>
            <person name="Clark G."/>
            <person name="Cooper J."/>
            <person name="Tromans A."/>
            <person name="Grafham D."/>
            <person name="Skuce C."/>
            <person name="Pandian R."/>
            <person name="Andrews R."/>
            <person name="Harrison E."/>
            <person name="Kimberley A."/>
            <person name="Garnett J."/>
            <person name="Fosker N."/>
            <person name="Hall R."/>
            <person name="Garner P."/>
            <person name="Kelly D."/>
            <person name="Bird C."/>
            <person name="Palmer S."/>
            <person name="Gehring I."/>
            <person name="Berger A."/>
            <person name="Dooley C.M."/>
            <person name="Ersan-Urun Z."/>
            <person name="Eser C."/>
            <person name="Geiger H."/>
            <person name="Geisler M."/>
            <person name="Karotki L."/>
            <person name="Kirn A."/>
            <person name="Konantz J."/>
            <person name="Konantz M."/>
            <person name="Oberlander M."/>
            <person name="Rudolph-Geiger S."/>
            <person name="Teucke M."/>
            <person name="Lanz C."/>
            <person name="Raddatz G."/>
            <person name="Osoegawa K."/>
            <person name="Zhu B."/>
            <person name="Rapp A."/>
            <person name="Widaa S."/>
            <person name="Langford C."/>
            <person name="Yang F."/>
            <person name="Schuster S.C."/>
            <person name="Carter N.P."/>
            <person name="Harrow J."/>
            <person name="Ning Z."/>
            <person name="Herrero J."/>
            <person name="Searle S.M."/>
            <person name="Enright A."/>
            <person name="Geisler R."/>
            <person name="Plasterk R.H."/>
            <person name="Lee C."/>
            <person name="Westerfield M."/>
            <person name="de Jong P.J."/>
            <person name="Zon L.I."/>
            <person name="Postlethwait J.H."/>
            <person name="Nusslein-Volhard C."/>
            <person name="Hubbard T.J."/>
            <person name="Roest Crollius H."/>
            <person name="Rogers J."/>
            <person name="Stemple D.L."/>
        </authorList>
    </citation>
    <scope>NUCLEOTIDE SEQUENCE [LARGE SCALE GENOMIC DNA]</scope>
    <source>
        <strain>Tuebingen</strain>
    </source>
</reference>
<reference key="2">
    <citation type="submission" date="2004-10" db="EMBL/GenBank/DDBJ databases">
        <authorList>
            <consortium name="NIH - Zebrafish Gene Collection (ZGC) project"/>
        </authorList>
    </citation>
    <scope>NUCLEOTIDE SEQUENCE [LARGE SCALE MRNA]</scope>
    <source>
        <tissue>Ovary</tissue>
    </source>
</reference>
<reference evidence="8" key="3">
    <citation type="journal article" date="2023" name="Nature">
        <title>A molecular network of conserved factors keeps ribosomes dormant in the egg.</title>
        <authorList>
            <person name="Leesch F."/>
            <person name="Lorenzo-Orts L."/>
            <person name="Pribitzer C."/>
            <person name="Grishkovskaya I."/>
            <person name="Roehsner J."/>
            <person name="Chugunova A."/>
            <person name="Matzinger M."/>
            <person name="Roitinger E."/>
            <person name="Belacic K."/>
            <person name="Kandolf S."/>
            <person name="Lin T.Y."/>
            <person name="Mechtler K."/>
            <person name="Meinhart A."/>
            <person name="Haselbach D."/>
            <person name="Pauli A."/>
        </authorList>
    </citation>
    <scope>STRUCTURE BY ELECTRON MICROSCOPY (3.20 ANGSTROMS) IN COMPLEX WITH EEF2 AND RIBOSOME</scope>
    <scope>FUNCTION</scope>
    <scope>INTERACTION WITH EEF2</scope>
    <scope>RIBOSOME-BINDING</scope>
</reference>
<proteinExistence type="evidence at protein level"/>
<gene>
    <name evidence="5" type="primary">habp4</name>
    <name evidence="6" type="ORF">zgc:103482</name>
</gene>
<dbReference type="EMBL" id="AL844141">
    <property type="status" value="NOT_ANNOTATED_CDS"/>
    <property type="molecule type" value="Genomic_DNA"/>
</dbReference>
<dbReference type="EMBL" id="BC083399">
    <property type="protein sequence ID" value="AAH83399.1"/>
    <property type="molecule type" value="mRNA"/>
</dbReference>
<dbReference type="EMBL" id="BC164158">
    <property type="protein sequence ID" value="AAI64158.1"/>
    <property type="molecule type" value="mRNA"/>
</dbReference>
<dbReference type="RefSeq" id="NP_001006022.1">
    <property type="nucleotide sequence ID" value="NM_001006022.1"/>
</dbReference>
<dbReference type="PDB" id="7OYA">
    <property type="method" value="EM"/>
    <property type="resolution" value="3.20 A"/>
    <property type="chains" value="i2=1-347"/>
</dbReference>
<dbReference type="PDBsum" id="7OYA"/>
<dbReference type="EMDB" id="EMD-13111"/>
<dbReference type="SMR" id="Q5XJA5"/>
<dbReference type="STRING" id="7955.ENSDARP00000007173"/>
<dbReference type="PaxDb" id="7955-ENSDARP00000007173"/>
<dbReference type="Ensembl" id="ENSDART00000003299">
    <property type="protein sequence ID" value="ENSDARP00000007173"/>
    <property type="gene ID" value="ENSDARG00000025174"/>
</dbReference>
<dbReference type="GeneID" id="450001"/>
<dbReference type="KEGG" id="dre:450001"/>
<dbReference type="AGR" id="ZFIN:ZDB-GENE-041010-115"/>
<dbReference type="ZFIN" id="ZDB-GENE-041010-115">
    <property type="gene designation" value="zgc:103482"/>
</dbReference>
<dbReference type="eggNOG" id="KOG2945">
    <property type="taxonomic scope" value="Eukaryota"/>
</dbReference>
<dbReference type="HOGENOM" id="CLU_037366_2_1_1"/>
<dbReference type="InParanoid" id="Q5XJA5"/>
<dbReference type="OMA" id="FRNNDAP"/>
<dbReference type="OrthoDB" id="6022699at2759"/>
<dbReference type="TreeFam" id="TF318374"/>
<dbReference type="PRO" id="PR:Q5XJA5"/>
<dbReference type="Proteomes" id="UP000000437">
    <property type="component" value="Chromosome 21"/>
</dbReference>
<dbReference type="Bgee" id="ENSDARG00000025174">
    <property type="expression patterns" value="Expressed in testis and 23 other cell types or tissues"/>
</dbReference>
<dbReference type="GO" id="GO:0015030">
    <property type="term" value="C:Cajal body"/>
    <property type="evidence" value="ECO:0007669"/>
    <property type="project" value="UniProtKB-SubCell"/>
</dbReference>
<dbReference type="GO" id="GO:0005737">
    <property type="term" value="C:cytoplasm"/>
    <property type="evidence" value="ECO:0000318"/>
    <property type="project" value="GO_Central"/>
</dbReference>
<dbReference type="GO" id="GO:0010494">
    <property type="term" value="C:cytoplasmic stress granule"/>
    <property type="evidence" value="ECO:0007669"/>
    <property type="project" value="UniProtKB-SubCell"/>
</dbReference>
<dbReference type="GO" id="GO:0016607">
    <property type="term" value="C:nuclear speck"/>
    <property type="evidence" value="ECO:0007669"/>
    <property type="project" value="UniProtKB-SubCell"/>
</dbReference>
<dbReference type="GO" id="GO:0005730">
    <property type="term" value="C:nucleolus"/>
    <property type="evidence" value="ECO:0007669"/>
    <property type="project" value="UniProtKB-SubCell"/>
</dbReference>
<dbReference type="GO" id="GO:0005634">
    <property type="term" value="C:nucleus"/>
    <property type="evidence" value="ECO:0000318"/>
    <property type="project" value="GO_Central"/>
</dbReference>
<dbReference type="GO" id="GO:0043022">
    <property type="term" value="F:ribosome binding"/>
    <property type="evidence" value="ECO:0000314"/>
    <property type="project" value="UniProtKB"/>
</dbReference>
<dbReference type="GO" id="GO:0003723">
    <property type="term" value="F:RNA binding"/>
    <property type="evidence" value="ECO:0000318"/>
    <property type="project" value="GO_Central"/>
</dbReference>
<dbReference type="GO" id="GO:0061770">
    <property type="term" value="F:translation elongation factor binding"/>
    <property type="evidence" value="ECO:0000353"/>
    <property type="project" value="UniProtKB"/>
</dbReference>
<dbReference type="GO" id="GO:0033120">
    <property type="term" value="P:positive regulation of RNA splicing"/>
    <property type="evidence" value="ECO:0000318"/>
    <property type="project" value="GO_Central"/>
</dbReference>
<dbReference type="GO" id="GO:0045948">
    <property type="term" value="P:positive regulation of translational initiation"/>
    <property type="evidence" value="ECO:0000318"/>
    <property type="project" value="GO_Central"/>
</dbReference>
<dbReference type="GO" id="GO:0141014">
    <property type="term" value="P:ribosome hibernation"/>
    <property type="evidence" value="ECO:0000314"/>
    <property type="project" value="UniProtKB"/>
</dbReference>
<dbReference type="InterPro" id="IPR039764">
    <property type="entry name" value="HABP4/SERBP1-like"/>
</dbReference>
<dbReference type="InterPro" id="IPR006861">
    <property type="entry name" value="HABP4_PAIRBP1-bd"/>
</dbReference>
<dbReference type="InterPro" id="IPR032381">
    <property type="entry name" value="IHABP4_N"/>
</dbReference>
<dbReference type="PANTHER" id="PTHR12299">
    <property type="entry name" value="HYALURONIC ACID-BINDING PROTEIN 4"/>
    <property type="match status" value="1"/>
</dbReference>
<dbReference type="PANTHER" id="PTHR12299:SF30">
    <property type="entry name" value="INTRACELLULAR HYALURONAN-BINDING PROTEIN 4"/>
    <property type="match status" value="1"/>
</dbReference>
<dbReference type="Pfam" id="PF04774">
    <property type="entry name" value="HABP4_PAI-RBP1"/>
    <property type="match status" value="1"/>
</dbReference>
<dbReference type="Pfam" id="PF16174">
    <property type="entry name" value="IHABP4_N"/>
    <property type="match status" value="1"/>
</dbReference>
<dbReference type="SMART" id="SM01233">
    <property type="entry name" value="HABP4_PAI-RBP1"/>
    <property type="match status" value="1"/>
</dbReference>
<accession>Q5XJA5</accession>
<accession>B0R085</accession>
<sequence>MKELVEEMPDEGYGCTVANRFGQLLGDESDPFDILYAAGTEKKQKKKKEEPKKTSTTTKSVKKESQRDRKTILPAGGGGQVRPGHEVVEEPIQRRVTFDRKFNDAEKPPLSFSVERPVDVLDRPARGRGTGRGKGARGPGFPRSNDGFDQRGKREFERHSGSDRSSVRSEEKRSGSGSRNWGSVRDHMSVIEVASPSEEVTENEETQEAVETDGENRPSETEEVIEVAMEMTLDEWKALQEQSRPKVELNIRKTESSVPSKAVVIHKSKLLQKQDGMDEDVVFRRPANDITCQLEFNFGSLDRPTRGGRGGRGGRGRGGPSMPTLRSPQKFDSAPNPDDPEDFPALA</sequence>
<organism>
    <name type="scientific">Danio rerio</name>
    <name type="common">Zebrafish</name>
    <name type="synonym">Brachydanio rerio</name>
    <dbReference type="NCBI Taxonomy" id="7955"/>
    <lineage>
        <taxon>Eukaryota</taxon>
        <taxon>Metazoa</taxon>
        <taxon>Chordata</taxon>
        <taxon>Craniata</taxon>
        <taxon>Vertebrata</taxon>
        <taxon>Euteleostomi</taxon>
        <taxon>Actinopterygii</taxon>
        <taxon>Neopterygii</taxon>
        <taxon>Teleostei</taxon>
        <taxon>Ostariophysi</taxon>
        <taxon>Cypriniformes</taxon>
        <taxon>Danionidae</taxon>
        <taxon>Danioninae</taxon>
        <taxon>Danio</taxon>
    </lineage>
</organism>
<feature type="chain" id="PRO_0000458232" description="Intracellular hyaluronan-binding protein 4">
    <location>
        <begin position="1"/>
        <end position="347"/>
    </location>
</feature>
<feature type="region of interest" description="Disordered" evidence="3">
    <location>
        <begin position="39"/>
        <end position="221"/>
    </location>
</feature>
<feature type="region of interest" description="Disordered" evidence="3">
    <location>
        <begin position="298"/>
        <end position="347"/>
    </location>
</feature>
<feature type="compositionally biased region" description="Basic and acidic residues" evidence="3">
    <location>
        <begin position="61"/>
        <end position="71"/>
    </location>
</feature>
<feature type="compositionally biased region" description="Basic and acidic residues" evidence="3">
    <location>
        <begin position="83"/>
        <end position="107"/>
    </location>
</feature>
<feature type="compositionally biased region" description="Basic and acidic residues" evidence="3">
    <location>
        <begin position="116"/>
        <end position="125"/>
    </location>
</feature>
<feature type="compositionally biased region" description="Basic and acidic residues" evidence="3">
    <location>
        <begin position="146"/>
        <end position="174"/>
    </location>
</feature>
<feature type="compositionally biased region" description="Acidic residues" evidence="3">
    <location>
        <begin position="199"/>
        <end position="213"/>
    </location>
</feature>
<feature type="compositionally biased region" description="Gly residues" evidence="3">
    <location>
        <begin position="307"/>
        <end position="319"/>
    </location>
</feature>
<feature type="compositionally biased region" description="Acidic residues" evidence="3">
    <location>
        <begin position="338"/>
        <end position="347"/>
    </location>
</feature>
<feature type="sequence conflict" description="In Ref. 2; AAH83399/AAI64158." evidence="7" ref="2">
    <original>K</original>
    <variation>R</variation>
    <location>
        <position position="134"/>
    </location>
</feature>
<feature type="sequence conflict" description="In Ref. 2; AAH83399/AAI64158." evidence="7" ref="2">
    <original>G</original>
    <variation>V</variation>
    <location>
        <position position="140"/>
    </location>
</feature>
<keyword id="KW-0002">3D-structure</keyword>
<keyword id="KW-0963">Cytoplasm</keyword>
<keyword id="KW-0539">Nucleus</keyword>
<keyword id="KW-1185">Reference proteome</keyword>
<keyword id="KW-0810">Translation regulation</keyword>
<evidence type="ECO:0000250" key="1">
    <source>
        <dbReference type="UniProtKB" id="Q5JVS0"/>
    </source>
</evidence>
<evidence type="ECO:0000250" key="2">
    <source>
        <dbReference type="UniProtKB" id="Q9I9R0"/>
    </source>
</evidence>
<evidence type="ECO:0000256" key="3">
    <source>
        <dbReference type="SAM" id="MobiDB-lite"/>
    </source>
</evidence>
<evidence type="ECO:0000269" key="4">
    <source>
    </source>
</evidence>
<evidence type="ECO:0000303" key="5">
    <source>
    </source>
</evidence>
<evidence type="ECO:0000303" key="6">
    <source ref="2"/>
</evidence>
<evidence type="ECO:0000305" key="7"/>
<evidence type="ECO:0007829" key="8">
    <source>
        <dbReference type="PDB" id="7OYA"/>
    </source>
</evidence>
<name>HABP4_DANRE</name>